<sequence length="128" mass="13836">MSKPFYVRFEVPPELAEKAYEALRKARESGGKIKKGTNETTKAVDKGLAKLVLIAEDVDPPEIVAHLPLLCEEKKIPYVYVPSKKKLGEAAGIEVQAAAAAIIDPGAAKDLVEEIIKEVEQIKAKAGL</sequence>
<feature type="chain" id="PRO_1000005027" description="Large ribosomal subunit protein eL8">
    <location>
        <begin position="1"/>
        <end position="128"/>
    </location>
</feature>
<organism>
    <name type="scientific">Ignicoccus hospitalis (strain KIN4/I / DSM 18386 / JCM 14125)</name>
    <dbReference type="NCBI Taxonomy" id="453591"/>
    <lineage>
        <taxon>Archaea</taxon>
        <taxon>Thermoproteota</taxon>
        <taxon>Thermoprotei</taxon>
        <taxon>Desulfurococcales</taxon>
        <taxon>Desulfurococcaceae</taxon>
        <taxon>Ignicoccus</taxon>
    </lineage>
</organism>
<gene>
    <name evidence="1" type="primary">rpl7ae</name>
    <name type="ordered locus">Igni_0230</name>
</gene>
<protein>
    <recommendedName>
        <fullName evidence="1">Large ribosomal subunit protein eL8</fullName>
    </recommendedName>
    <alternativeName>
        <fullName evidence="2">50S ribosomal protein L7Ae</fullName>
    </alternativeName>
    <alternativeName>
        <fullName evidence="1">Ribosomal protein L8e</fullName>
    </alternativeName>
</protein>
<keyword id="KW-0963">Cytoplasm</keyword>
<keyword id="KW-1185">Reference proteome</keyword>
<keyword id="KW-0687">Ribonucleoprotein</keyword>
<keyword id="KW-0689">Ribosomal protein</keyword>
<keyword id="KW-0694">RNA-binding</keyword>
<keyword id="KW-0699">rRNA-binding</keyword>
<keyword id="KW-0819">tRNA processing</keyword>
<comment type="function">
    <text evidence="1">Multifunctional RNA-binding protein that recognizes the K-turn motif in ribosomal RNA, the RNA component of RNase P, box H/ACA, box C/D and box C'/D' sRNAs.</text>
</comment>
<comment type="subunit">
    <text evidence="1">Part of the 50S ribosomal subunit. Probably part of the RNase P complex.</text>
</comment>
<comment type="subcellular location">
    <subcellularLocation>
        <location evidence="1">Cytoplasm</location>
    </subcellularLocation>
</comment>
<comment type="similarity">
    <text evidence="1">Belongs to the eukaryotic ribosomal protein eL8 family.</text>
</comment>
<name>RL7A_IGNH4</name>
<accession>A8A912</accession>
<reference key="1">
    <citation type="journal article" date="2008" name="Genome Biol.">
        <title>A genomic analysis of the archaeal system Ignicoccus hospitalis-Nanoarchaeum equitans.</title>
        <authorList>
            <person name="Podar M."/>
            <person name="Anderson I."/>
            <person name="Makarova K.S."/>
            <person name="Elkins J.G."/>
            <person name="Ivanova N."/>
            <person name="Wall M.A."/>
            <person name="Lykidis A."/>
            <person name="Mavromatis K."/>
            <person name="Sun H."/>
            <person name="Hudson M.E."/>
            <person name="Chen W."/>
            <person name="Deciu C."/>
            <person name="Hutchison D."/>
            <person name="Eads J.R."/>
            <person name="Anderson A."/>
            <person name="Fernandes F."/>
            <person name="Szeto E."/>
            <person name="Lapidus A."/>
            <person name="Kyrpides N.C."/>
            <person name="Saier M.H. Jr."/>
            <person name="Richardson P.M."/>
            <person name="Rachel R."/>
            <person name="Huber H."/>
            <person name="Eisen J.A."/>
            <person name="Koonin E.V."/>
            <person name="Keller M."/>
            <person name="Stetter K.O."/>
        </authorList>
    </citation>
    <scope>NUCLEOTIDE SEQUENCE [LARGE SCALE GENOMIC DNA]</scope>
    <source>
        <strain>KIN4/I / DSM 18386 / JCM 14125</strain>
    </source>
</reference>
<evidence type="ECO:0000255" key="1">
    <source>
        <dbReference type="HAMAP-Rule" id="MF_00326"/>
    </source>
</evidence>
<evidence type="ECO:0000305" key="2"/>
<dbReference type="EMBL" id="CP000816">
    <property type="protein sequence ID" value="ABU81414.1"/>
    <property type="molecule type" value="Genomic_DNA"/>
</dbReference>
<dbReference type="RefSeq" id="WP_011998266.1">
    <property type="nucleotide sequence ID" value="NC_009776.1"/>
</dbReference>
<dbReference type="SMR" id="A8A912"/>
<dbReference type="STRING" id="453591.Igni_0230"/>
<dbReference type="GeneID" id="5562059"/>
<dbReference type="KEGG" id="iho:Igni_0230"/>
<dbReference type="eggNOG" id="arCOG01751">
    <property type="taxonomic scope" value="Archaea"/>
</dbReference>
<dbReference type="HOGENOM" id="CLU_084513_4_0_2"/>
<dbReference type="OrthoDB" id="25810at2157"/>
<dbReference type="PhylomeDB" id="A8A912"/>
<dbReference type="Proteomes" id="UP000000262">
    <property type="component" value="Chromosome"/>
</dbReference>
<dbReference type="GO" id="GO:0005737">
    <property type="term" value="C:cytoplasm"/>
    <property type="evidence" value="ECO:0007669"/>
    <property type="project" value="UniProtKB-SubCell"/>
</dbReference>
<dbReference type="GO" id="GO:1990904">
    <property type="term" value="C:ribonucleoprotein complex"/>
    <property type="evidence" value="ECO:0007669"/>
    <property type="project" value="UniProtKB-KW"/>
</dbReference>
<dbReference type="GO" id="GO:0005840">
    <property type="term" value="C:ribosome"/>
    <property type="evidence" value="ECO:0007669"/>
    <property type="project" value="UniProtKB-KW"/>
</dbReference>
<dbReference type="GO" id="GO:0004526">
    <property type="term" value="F:ribonuclease P activity"/>
    <property type="evidence" value="ECO:0007669"/>
    <property type="project" value="UniProtKB-UniRule"/>
</dbReference>
<dbReference type="GO" id="GO:0019843">
    <property type="term" value="F:rRNA binding"/>
    <property type="evidence" value="ECO:0007669"/>
    <property type="project" value="UniProtKB-KW"/>
</dbReference>
<dbReference type="GO" id="GO:0003735">
    <property type="term" value="F:structural constituent of ribosome"/>
    <property type="evidence" value="ECO:0007669"/>
    <property type="project" value="InterPro"/>
</dbReference>
<dbReference type="GO" id="GO:0042254">
    <property type="term" value="P:ribosome biogenesis"/>
    <property type="evidence" value="ECO:0007669"/>
    <property type="project" value="InterPro"/>
</dbReference>
<dbReference type="GO" id="GO:0006412">
    <property type="term" value="P:translation"/>
    <property type="evidence" value="ECO:0007669"/>
    <property type="project" value="UniProtKB-UniRule"/>
</dbReference>
<dbReference type="GO" id="GO:0001682">
    <property type="term" value="P:tRNA 5'-leader removal"/>
    <property type="evidence" value="ECO:0007669"/>
    <property type="project" value="UniProtKB-UniRule"/>
</dbReference>
<dbReference type="FunFam" id="3.30.1330.30:FF:000020">
    <property type="entry name" value="50S ribosomal protein L7Ae"/>
    <property type="match status" value="1"/>
</dbReference>
<dbReference type="Gene3D" id="3.30.1330.30">
    <property type="match status" value="1"/>
</dbReference>
<dbReference type="HAMAP" id="MF_00326">
    <property type="entry name" value="Ribosomal_eL8"/>
    <property type="match status" value="1"/>
</dbReference>
<dbReference type="InterPro" id="IPR050257">
    <property type="entry name" value="eL8/uL1-like"/>
</dbReference>
<dbReference type="InterPro" id="IPR029064">
    <property type="entry name" value="Ribosomal_eL30-like_sf"/>
</dbReference>
<dbReference type="InterPro" id="IPR004037">
    <property type="entry name" value="Ribosomal_eL8-like_CS"/>
</dbReference>
<dbReference type="InterPro" id="IPR004038">
    <property type="entry name" value="Ribosomal_eL8/eL30/eS12/Gad45"/>
</dbReference>
<dbReference type="InterPro" id="IPR018492">
    <property type="entry name" value="Ribosomal_eL8/Nhp2"/>
</dbReference>
<dbReference type="InterPro" id="IPR022481">
    <property type="entry name" value="Ribosomal_eL8_arc"/>
</dbReference>
<dbReference type="NCBIfam" id="TIGR03677">
    <property type="entry name" value="eL8_ribo"/>
    <property type="match status" value="1"/>
</dbReference>
<dbReference type="PANTHER" id="PTHR23105">
    <property type="entry name" value="RIBOSOMAL PROTEIN L7AE FAMILY MEMBER"/>
    <property type="match status" value="1"/>
</dbReference>
<dbReference type="Pfam" id="PF01248">
    <property type="entry name" value="Ribosomal_L7Ae"/>
    <property type="match status" value="1"/>
</dbReference>
<dbReference type="PRINTS" id="PR00881">
    <property type="entry name" value="L7ARS6FAMILY"/>
</dbReference>
<dbReference type="PRINTS" id="PR00884">
    <property type="entry name" value="RIBOSOMALHS6"/>
</dbReference>
<dbReference type="SUPFAM" id="SSF55315">
    <property type="entry name" value="L30e-like"/>
    <property type="match status" value="1"/>
</dbReference>
<dbReference type="PROSITE" id="PS01082">
    <property type="entry name" value="RIBOSOMAL_L7AE"/>
    <property type="match status" value="1"/>
</dbReference>
<proteinExistence type="inferred from homology"/>